<reference key="1">
    <citation type="submission" date="2006-09" db="EMBL/GenBank/DDBJ databases">
        <title>Complete sequence of chromosome 1 of Shewanella sp. ANA-3.</title>
        <authorList>
            <person name="Copeland A."/>
            <person name="Lucas S."/>
            <person name="Lapidus A."/>
            <person name="Barry K."/>
            <person name="Detter J.C."/>
            <person name="Glavina del Rio T."/>
            <person name="Hammon N."/>
            <person name="Israni S."/>
            <person name="Dalin E."/>
            <person name="Tice H."/>
            <person name="Pitluck S."/>
            <person name="Chertkov O."/>
            <person name="Brettin T."/>
            <person name="Bruce D."/>
            <person name="Han C."/>
            <person name="Tapia R."/>
            <person name="Gilna P."/>
            <person name="Schmutz J."/>
            <person name="Larimer F."/>
            <person name="Land M."/>
            <person name="Hauser L."/>
            <person name="Kyrpides N."/>
            <person name="Kim E."/>
            <person name="Newman D."/>
            <person name="Salticov C."/>
            <person name="Konstantinidis K."/>
            <person name="Klappenback J."/>
            <person name="Tiedje J."/>
            <person name="Richardson P."/>
        </authorList>
    </citation>
    <scope>NUCLEOTIDE SEQUENCE [LARGE SCALE GENOMIC DNA]</scope>
    <source>
        <strain>ANA-3</strain>
    </source>
</reference>
<dbReference type="EC" id="2.7.8.13" evidence="1"/>
<dbReference type="EMBL" id="CP000469">
    <property type="protein sequence ID" value="ABK49964.1"/>
    <property type="molecule type" value="Genomic_DNA"/>
</dbReference>
<dbReference type="RefSeq" id="WP_011624300.1">
    <property type="nucleotide sequence ID" value="NC_008577.1"/>
</dbReference>
<dbReference type="SMR" id="A0L1P5"/>
<dbReference type="STRING" id="94122.Shewana3_3746"/>
<dbReference type="GeneID" id="94729677"/>
<dbReference type="KEGG" id="shn:Shewana3_3746"/>
<dbReference type="eggNOG" id="COG0472">
    <property type="taxonomic scope" value="Bacteria"/>
</dbReference>
<dbReference type="HOGENOM" id="CLU_023982_0_0_6"/>
<dbReference type="OrthoDB" id="9805475at2"/>
<dbReference type="UniPathway" id="UPA00219"/>
<dbReference type="Proteomes" id="UP000002589">
    <property type="component" value="Chromosome"/>
</dbReference>
<dbReference type="GO" id="GO:0005886">
    <property type="term" value="C:plasma membrane"/>
    <property type="evidence" value="ECO:0007669"/>
    <property type="project" value="UniProtKB-SubCell"/>
</dbReference>
<dbReference type="GO" id="GO:0046872">
    <property type="term" value="F:metal ion binding"/>
    <property type="evidence" value="ECO:0007669"/>
    <property type="project" value="UniProtKB-KW"/>
</dbReference>
<dbReference type="GO" id="GO:0008963">
    <property type="term" value="F:phospho-N-acetylmuramoyl-pentapeptide-transferase activity"/>
    <property type="evidence" value="ECO:0007669"/>
    <property type="project" value="UniProtKB-UniRule"/>
</dbReference>
<dbReference type="GO" id="GO:0051992">
    <property type="term" value="F:UDP-N-acetylmuramoyl-L-alanyl-D-glutamyl-meso-2,6-diaminopimelyl-D-alanyl-D-alanine:undecaprenyl-phosphate transferase activity"/>
    <property type="evidence" value="ECO:0007669"/>
    <property type="project" value="RHEA"/>
</dbReference>
<dbReference type="GO" id="GO:0051301">
    <property type="term" value="P:cell division"/>
    <property type="evidence" value="ECO:0007669"/>
    <property type="project" value="UniProtKB-KW"/>
</dbReference>
<dbReference type="GO" id="GO:0071555">
    <property type="term" value="P:cell wall organization"/>
    <property type="evidence" value="ECO:0007669"/>
    <property type="project" value="UniProtKB-KW"/>
</dbReference>
<dbReference type="GO" id="GO:0009252">
    <property type="term" value="P:peptidoglycan biosynthetic process"/>
    <property type="evidence" value="ECO:0007669"/>
    <property type="project" value="UniProtKB-UniRule"/>
</dbReference>
<dbReference type="GO" id="GO:0008360">
    <property type="term" value="P:regulation of cell shape"/>
    <property type="evidence" value="ECO:0007669"/>
    <property type="project" value="UniProtKB-KW"/>
</dbReference>
<dbReference type="CDD" id="cd06852">
    <property type="entry name" value="GT_MraY"/>
    <property type="match status" value="1"/>
</dbReference>
<dbReference type="HAMAP" id="MF_00038">
    <property type="entry name" value="MraY"/>
    <property type="match status" value="1"/>
</dbReference>
<dbReference type="InterPro" id="IPR000715">
    <property type="entry name" value="Glycosyl_transferase_4"/>
</dbReference>
<dbReference type="InterPro" id="IPR003524">
    <property type="entry name" value="PNAcMuramoyl-5peptid_Trfase"/>
</dbReference>
<dbReference type="InterPro" id="IPR018480">
    <property type="entry name" value="PNAcMuramoyl-5peptid_Trfase_CS"/>
</dbReference>
<dbReference type="NCBIfam" id="TIGR00445">
    <property type="entry name" value="mraY"/>
    <property type="match status" value="1"/>
</dbReference>
<dbReference type="PANTHER" id="PTHR22926">
    <property type="entry name" value="PHOSPHO-N-ACETYLMURAMOYL-PENTAPEPTIDE-TRANSFERASE"/>
    <property type="match status" value="1"/>
</dbReference>
<dbReference type="PANTHER" id="PTHR22926:SF5">
    <property type="entry name" value="PHOSPHO-N-ACETYLMURAMOYL-PENTAPEPTIDE-TRANSFERASE HOMOLOG"/>
    <property type="match status" value="1"/>
</dbReference>
<dbReference type="Pfam" id="PF00953">
    <property type="entry name" value="Glycos_transf_4"/>
    <property type="match status" value="1"/>
</dbReference>
<dbReference type="Pfam" id="PF10555">
    <property type="entry name" value="MraY_sig1"/>
    <property type="match status" value="1"/>
</dbReference>
<dbReference type="PROSITE" id="PS01347">
    <property type="entry name" value="MRAY_1"/>
    <property type="match status" value="1"/>
</dbReference>
<dbReference type="PROSITE" id="PS01348">
    <property type="entry name" value="MRAY_2"/>
    <property type="match status" value="1"/>
</dbReference>
<accession>A0L1P5</accession>
<gene>
    <name evidence="1" type="primary">mraY</name>
    <name type="ordered locus">Shewana3_3746</name>
</gene>
<sequence>MLVYLAEYLTRFHTGFNVFSYVTFRAILGLLTALMFSLWWGPKLIERLQLMQIGQVVRNDGPESHFSKRGTPTMGGLMILGAIFISVLLWGDLGSRYVWVMLFVLGSFGMIGFIDDYRKVVRKDTKGLIARWKYILQSLAALIIAFFLYTTASNPGETQLVVPFFKDVMPQLGAVFIVLAYFTIVGSSNAVNLTDGLDGLAIMPTVMVAAAFALIAYLSGHAQFANYLHIPHLPGSGELVIVCTAIVGAGLGFLWFNTYPAQVFMGDVGSLSLGAALGAIAVLVRQEILLVIMGGVFVMETVSVILQVGSYKLRGQRIFRMAPIHHHYELKGWPEPRVIVRFWIISIFLVLLGLATLKLR</sequence>
<comment type="function">
    <text evidence="1">Catalyzes the initial step of the lipid cycle reactions in the biosynthesis of the cell wall peptidoglycan: transfers peptidoglycan precursor phospho-MurNAc-pentapeptide from UDP-MurNAc-pentapeptide onto the lipid carrier undecaprenyl phosphate, yielding undecaprenyl-pyrophosphoryl-MurNAc-pentapeptide, known as lipid I.</text>
</comment>
<comment type="catalytic activity">
    <reaction evidence="1">
        <text>UDP-N-acetyl-alpha-D-muramoyl-L-alanyl-gamma-D-glutamyl-meso-2,6-diaminopimeloyl-D-alanyl-D-alanine + di-trans,octa-cis-undecaprenyl phosphate = di-trans,octa-cis-undecaprenyl diphospho-N-acetyl-alpha-D-muramoyl-L-alanyl-D-glutamyl-meso-2,6-diaminopimeloyl-D-alanyl-D-alanine + UMP</text>
        <dbReference type="Rhea" id="RHEA:28386"/>
        <dbReference type="ChEBI" id="CHEBI:57865"/>
        <dbReference type="ChEBI" id="CHEBI:60392"/>
        <dbReference type="ChEBI" id="CHEBI:61386"/>
        <dbReference type="ChEBI" id="CHEBI:61387"/>
        <dbReference type="EC" id="2.7.8.13"/>
    </reaction>
</comment>
<comment type="cofactor">
    <cofactor evidence="1">
        <name>Mg(2+)</name>
        <dbReference type="ChEBI" id="CHEBI:18420"/>
    </cofactor>
</comment>
<comment type="pathway">
    <text evidence="1">Cell wall biogenesis; peptidoglycan biosynthesis.</text>
</comment>
<comment type="subcellular location">
    <subcellularLocation>
        <location evidence="1">Cell inner membrane</location>
        <topology evidence="1">Multi-pass membrane protein</topology>
    </subcellularLocation>
</comment>
<comment type="similarity">
    <text evidence="1">Belongs to the glycosyltransferase 4 family. MraY subfamily.</text>
</comment>
<keyword id="KW-0131">Cell cycle</keyword>
<keyword id="KW-0132">Cell division</keyword>
<keyword id="KW-0997">Cell inner membrane</keyword>
<keyword id="KW-1003">Cell membrane</keyword>
<keyword id="KW-0133">Cell shape</keyword>
<keyword id="KW-0961">Cell wall biogenesis/degradation</keyword>
<keyword id="KW-0460">Magnesium</keyword>
<keyword id="KW-0472">Membrane</keyword>
<keyword id="KW-0479">Metal-binding</keyword>
<keyword id="KW-0573">Peptidoglycan synthesis</keyword>
<keyword id="KW-0808">Transferase</keyword>
<keyword id="KW-0812">Transmembrane</keyword>
<keyword id="KW-1133">Transmembrane helix</keyword>
<protein>
    <recommendedName>
        <fullName evidence="1">Phospho-N-acetylmuramoyl-pentapeptide-transferase</fullName>
        <ecNumber evidence="1">2.7.8.13</ecNumber>
    </recommendedName>
    <alternativeName>
        <fullName evidence="1">UDP-MurNAc-pentapeptide phosphotransferase</fullName>
    </alternativeName>
</protein>
<evidence type="ECO:0000255" key="1">
    <source>
        <dbReference type="HAMAP-Rule" id="MF_00038"/>
    </source>
</evidence>
<proteinExistence type="inferred from homology"/>
<name>MRAY_SHESA</name>
<organism>
    <name type="scientific">Shewanella sp. (strain ANA-3)</name>
    <dbReference type="NCBI Taxonomy" id="94122"/>
    <lineage>
        <taxon>Bacteria</taxon>
        <taxon>Pseudomonadati</taxon>
        <taxon>Pseudomonadota</taxon>
        <taxon>Gammaproteobacteria</taxon>
        <taxon>Alteromonadales</taxon>
        <taxon>Shewanellaceae</taxon>
        <taxon>Shewanella</taxon>
    </lineage>
</organism>
<feature type="chain" id="PRO_1000003061" description="Phospho-N-acetylmuramoyl-pentapeptide-transferase">
    <location>
        <begin position="1"/>
        <end position="360"/>
    </location>
</feature>
<feature type="transmembrane region" description="Helical" evidence="1">
    <location>
        <begin position="26"/>
        <end position="46"/>
    </location>
</feature>
<feature type="transmembrane region" description="Helical" evidence="1">
    <location>
        <begin position="74"/>
        <end position="94"/>
    </location>
</feature>
<feature type="transmembrane region" description="Helical" evidence="1">
    <location>
        <begin position="97"/>
        <end position="117"/>
    </location>
</feature>
<feature type="transmembrane region" description="Helical" evidence="1">
    <location>
        <begin position="132"/>
        <end position="152"/>
    </location>
</feature>
<feature type="transmembrane region" description="Helical" evidence="1">
    <location>
        <begin position="168"/>
        <end position="188"/>
    </location>
</feature>
<feature type="transmembrane region" description="Helical" evidence="1">
    <location>
        <begin position="199"/>
        <end position="219"/>
    </location>
</feature>
<feature type="transmembrane region" description="Helical" evidence="1">
    <location>
        <begin position="236"/>
        <end position="256"/>
    </location>
</feature>
<feature type="transmembrane region" description="Helical" evidence="1">
    <location>
        <begin position="263"/>
        <end position="283"/>
    </location>
</feature>
<feature type="transmembrane region" description="Helical" evidence="1">
    <location>
        <begin position="288"/>
        <end position="308"/>
    </location>
</feature>
<feature type="transmembrane region" description="Helical" evidence="1">
    <location>
        <begin position="338"/>
        <end position="358"/>
    </location>
</feature>